<evidence type="ECO:0000250" key="1">
    <source>
        <dbReference type="UniProtKB" id="P56761"/>
    </source>
</evidence>
<evidence type="ECO:0000255" key="2">
    <source>
        <dbReference type="HAMAP-Rule" id="MF_01383"/>
    </source>
</evidence>
<organism>
    <name type="scientific">Welwitschia mirabilis</name>
    <name type="common">Tree tumbo</name>
    <name type="synonym">Welwitschia bainesii</name>
    <dbReference type="NCBI Taxonomy" id="3377"/>
    <lineage>
        <taxon>Eukaryota</taxon>
        <taxon>Viridiplantae</taxon>
        <taxon>Streptophyta</taxon>
        <taxon>Embryophyta</taxon>
        <taxon>Tracheophyta</taxon>
        <taxon>Spermatophyta</taxon>
        <taxon>Gnetopsida</taxon>
        <taxon>Gnetidae</taxon>
        <taxon>Welwitschiales</taxon>
        <taxon>Welwitschiaceae</taxon>
        <taxon>Welwitschia</taxon>
    </lineage>
</organism>
<sequence>MTIALGKFSKDEKTLLDVLDDWLRRDRFVFIGWSGLLLFPCAYFALGGWFTGTTFVTSWYTHGLASSYLEGCNFLTAAVSTPANSLAHSLLLLWGPEAQGDFTRWCQLGGLWTFVAFHGAFGLIGFMLRQFELARSVQLRPYNAIAFSAPIAVFVSVFLIYPLGQSGWFFAPSFGVAAIFRFILFFQGFHNWTLNPFHMMGVAGVLGAALLCAIHGATVENTLFEDGDGANTFRAFNPTQAEETYSMVTANRFWSQIFGVAFSNKRWLHFFMLFVPVTGLWMSAIGVVGLALNLRAYDFVSQEIRAAEDPEFETFYTKNILLNEGIRAWMAAQDQPHENLIFPEEVLPRGNAL</sequence>
<gene>
    <name evidence="2" type="primary">psbD</name>
</gene>
<protein>
    <recommendedName>
        <fullName evidence="2">Photosystem II D2 protein</fullName>
        <shortName evidence="2">PSII D2 protein</shortName>
        <ecNumber evidence="2">1.10.3.9</ecNumber>
    </recommendedName>
    <alternativeName>
        <fullName evidence="2">Photosystem Q(A) protein</fullName>
    </alternativeName>
</protein>
<feature type="initiator methionine" description="Removed" evidence="1">
    <location>
        <position position="1"/>
    </location>
</feature>
<feature type="chain" id="PRO_0000359700" description="Photosystem II D2 protein">
    <location>
        <begin position="2"/>
        <end position="353"/>
    </location>
</feature>
<feature type="transmembrane region" description="Helical" evidence="2">
    <location>
        <begin position="41"/>
        <end position="61"/>
    </location>
</feature>
<feature type="transmembrane region" description="Helical" evidence="2">
    <location>
        <begin position="125"/>
        <end position="141"/>
    </location>
</feature>
<feature type="transmembrane region" description="Helical" evidence="2">
    <location>
        <begin position="153"/>
        <end position="166"/>
    </location>
</feature>
<feature type="transmembrane region" description="Helical" evidence="2">
    <location>
        <begin position="208"/>
        <end position="228"/>
    </location>
</feature>
<feature type="transmembrane region" description="Helical" evidence="2">
    <location>
        <begin position="279"/>
        <end position="295"/>
    </location>
</feature>
<feature type="binding site" description="axial binding residue" evidence="2">
    <location>
        <position position="118"/>
    </location>
    <ligand>
        <name>chlorophyll a</name>
        <dbReference type="ChEBI" id="CHEBI:58416"/>
        <label>ChlzD2</label>
    </ligand>
    <ligandPart>
        <name>Mg</name>
        <dbReference type="ChEBI" id="CHEBI:25107"/>
    </ligandPart>
</feature>
<feature type="binding site" evidence="2">
    <location>
        <position position="130"/>
    </location>
    <ligand>
        <name>pheophytin a</name>
        <dbReference type="ChEBI" id="CHEBI:136840"/>
        <label>D2</label>
    </ligand>
</feature>
<feature type="binding site" evidence="2">
    <location>
        <position position="143"/>
    </location>
    <ligand>
        <name>pheophytin a</name>
        <dbReference type="ChEBI" id="CHEBI:136840"/>
        <label>D2</label>
    </ligand>
</feature>
<feature type="binding site" description="axial binding residue" evidence="2">
    <location>
        <position position="198"/>
    </location>
    <ligand>
        <name>chlorophyll a</name>
        <dbReference type="ChEBI" id="CHEBI:58416"/>
        <label>PD2</label>
    </ligand>
    <ligandPart>
        <name>Mg</name>
        <dbReference type="ChEBI" id="CHEBI:25107"/>
    </ligandPart>
</feature>
<feature type="binding site" evidence="2">
    <location>
        <position position="215"/>
    </location>
    <ligand>
        <name>a plastoquinone</name>
        <dbReference type="ChEBI" id="CHEBI:17757"/>
        <label>Q(A)</label>
    </ligand>
</feature>
<feature type="binding site" evidence="2">
    <location>
        <position position="215"/>
    </location>
    <ligand>
        <name>Fe cation</name>
        <dbReference type="ChEBI" id="CHEBI:24875"/>
        <note>ligand shared with heterodimeric partner</note>
    </ligand>
</feature>
<feature type="binding site" evidence="2">
    <location>
        <position position="262"/>
    </location>
    <ligand>
        <name>a plastoquinone</name>
        <dbReference type="ChEBI" id="CHEBI:17757"/>
        <label>Q(A)</label>
    </ligand>
</feature>
<feature type="binding site" evidence="2">
    <location>
        <position position="269"/>
    </location>
    <ligand>
        <name>Fe cation</name>
        <dbReference type="ChEBI" id="CHEBI:24875"/>
        <note>ligand shared with heterodimeric partner</note>
    </ligand>
</feature>
<feature type="modified residue" description="N-acetylthreonine" evidence="1">
    <location>
        <position position="2"/>
    </location>
</feature>
<feature type="modified residue" description="Phosphothreonine" evidence="1">
    <location>
        <position position="2"/>
    </location>
</feature>
<geneLocation type="chloroplast"/>
<name>PSBD_WELMI</name>
<comment type="function">
    <text evidence="2">Photosystem II (PSII) is a light-driven water:plastoquinone oxidoreductase that uses light energy to abstract electrons from H(2)O, generating O(2) and a proton gradient subsequently used for ATP formation. It consists of a core antenna complex that captures photons, and an electron transfer chain that converts photonic excitation into a charge separation. The D1/D2 (PsbA/PsbD) reaction center heterodimer binds P680, the primary electron donor of PSII as well as several subsequent electron acceptors. D2 is needed for assembly of a stable PSII complex.</text>
</comment>
<comment type="catalytic activity">
    <reaction evidence="2">
        <text>2 a plastoquinone + 4 hnu + 2 H2O = 2 a plastoquinol + O2</text>
        <dbReference type="Rhea" id="RHEA:36359"/>
        <dbReference type="Rhea" id="RHEA-COMP:9561"/>
        <dbReference type="Rhea" id="RHEA-COMP:9562"/>
        <dbReference type="ChEBI" id="CHEBI:15377"/>
        <dbReference type="ChEBI" id="CHEBI:15379"/>
        <dbReference type="ChEBI" id="CHEBI:17757"/>
        <dbReference type="ChEBI" id="CHEBI:30212"/>
        <dbReference type="ChEBI" id="CHEBI:62192"/>
        <dbReference type="EC" id="1.10.3.9"/>
    </reaction>
</comment>
<comment type="cofactor">
    <text evidence="2">The D1/D2 heterodimer binds P680, chlorophylls that are the primary electron donor of PSII, and subsequent electron acceptors. It shares a non-heme iron and each subunit binds pheophytin, quinone, additional chlorophylls, carotenoids and lipids. There is also a Cl(-1) ion associated with D1 and D2, which is required for oxygen evolution. The PSII complex binds additional chlorophylls, carotenoids and specific lipids.</text>
</comment>
<comment type="subunit">
    <text evidence="2">PSII is composed of 1 copy each of membrane proteins PsbA, PsbB, PsbC, PsbD, PsbE, PsbF, PsbH, PsbI, PsbJ, PsbK, PsbL, PsbM, PsbT, PsbX, PsbY, PsbZ, Psb30/Ycf12, at least 3 peripheral proteins of the oxygen-evolving complex and a large number of cofactors. It forms dimeric complexes.</text>
</comment>
<comment type="subcellular location">
    <subcellularLocation>
        <location evidence="2">Plastid</location>
        <location evidence="2">Chloroplast thylakoid membrane</location>
        <topology evidence="2">Multi-pass membrane protein</topology>
    </subcellularLocation>
</comment>
<comment type="miscellaneous">
    <text evidence="2">2 of the reaction center chlorophylls (ChlD1 and ChlD2) are entirely coordinated by water.</text>
</comment>
<comment type="similarity">
    <text evidence="2">Belongs to the reaction center PufL/M/PsbA/D family.</text>
</comment>
<keyword id="KW-0007">Acetylation</keyword>
<keyword id="KW-0148">Chlorophyll</keyword>
<keyword id="KW-0150">Chloroplast</keyword>
<keyword id="KW-0157">Chromophore</keyword>
<keyword id="KW-0249">Electron transport</keyword>
<keyword id="KW-0408">Iron</keyword>
<keyword id="KW-0460">Magnesium</keyword>
<keyword id="KW-0472">Membrane</keyword>
<keyword id="KW-0479">Metal-binding</keyword>
<keyword id="KW-0560">Oxidoreductase</keyword>
<keyword id="KW-0597">Phosphoprotein</keyword>
<keyword id="KW-0602">Photosynthesis</keyword>
<keyword id="KW-0604">Photosystem II</keyword>
<keyword id="KW-0934">Plastid</keyword>
<keyword id="KW-0793">Thylakoid</keyword>
<keyword id="KW-0812">Transmembrane</keyword>
<keyword id="KW-1133">Transmembrane helix</keyword>
<keyword id="KW-0813">Transport</keyword>
<reference key="1">
    <citation type="journal article" date="2008" name="BMC Evol. Biol.">
        <title>The complete plastid genome sequence of Welwitschia mirabilis: an unusually compact plastome with accelerated divergence rates.</title>
        <authorList>
            <person name="McCoy S.R."/>
            <person name="Kuehl J.V."/>
            <person name="Boore J.L."/>
            <person name="Raubeson L.A."/>
        </authorList>
    </citation>
    <scope>NUCLEOTIDE SEQUENCE [LARGE SCALE GENOMIC DNA]</scope>
</reference>
<reference key="2">
    <citation type="journal article" date="2009" name="Mol. Phylogenet. Evol.">
        <title>Evolution of reduced and compact chloroplast genomes (cpDNAs) in gnetophytes: Selection toward a lower-cost strategy.</title>
        <authorList>
            <person name="Wu C.-S."/>
            <person name="Lai Y.-T."/>
            <person name="Lin C.-P."/>
            <person name="Wang Y.-N."/>
            <person name="Chaw S.-M."/>
        </authorList>
    </citation>
    <scope>NUCLEOTIDE SEQUENCE [LARGE SCALE GENOMIC DNA]</scope>
</reference>
<accession>B2Y1U5</accession>
<accession>B7ZHZ4</accession>
<dbReference type="EC" id="1.10.3.9" evidence="2"/>
<dbReference type="EMBL" id="EU342371">
    <property type="protein sequence ID" value="ABY26775.1"/>
    <property type="molecule type" value="Genomic_DNA"/>
</dbReference>
<dbReference type="EMBL" id="AP009568">
    <property type="protein sequence ID" value="BAH11174.1"/>
    <property type="molecule type" value="Genomic_DNA"/>
</dbReference>
<dbReference type="RefSeq" id="YP_001876562.1">
    <property type="nucleotide sequence ID" value="NC_010654.1"/>
</dbReference>
<dbReference type="SMR" id="B2Y1U5"/>
<dbReference type="GeneID" id="6276259"/>
<dbReference type="GO" id="GO:0009535">
    <property type="term" value="C:chloroplast thylakoid membrane"/>
    <property type="evidence" value="ECO:0007669"/>
    <property type="project" value="UniProtKB-SubCell"/>
</dbReference>
<dbReference type="GO" id="GO:0009523">
    <property type="term" value="C:photosystem II"/>
    <property type="evidence" value="ECO:0007669"/>
    <property type="project" value="UniProtKB-KW"/>
</dbReference>
<dbReference type="GO" id="GO:0016168">
    <property type="term" value="F:chlorophyll binding"/>
    <property type="evidence" value="ECO:0007669"/>
    <property type="project" value="UniProtKB-UniRule"/>
</dbReference>
<dbReference type="GO" id="GO:0045156">
    <property type="term" value="F:electron transporter, transferring electrons within the cyclic electron transport pathway of photosynthesis activity"/>
    <property type="evidence" value="ECO:0007669"/>
    <property type="project" value="InterPro"/>
</dbReference>
<dbReference type="GO" id="GO:0005506">
    <property type="term" value="F:iron ion binding"/>
    <property type="evidence" value="ECO:0007669"/>
    <property type="project" value="UniProtKB-UniRule"/>
</dbReference>
<dbReference type="GO" id="GO:0010242">
    <property type="term" value="F:oxygen evolving activity"/>
    <property type="evidence" value="ECO:0007669"/>
    <property type="project" value="UniProtKB-EC"/>
</dbReference>
<dbReference type="GO" id="GO:0009772">
    <property type="term" value="P:photosynthetic electron transport in photosystem II"/>
    <property type="evidence" value="ECO:0007669"/>
    <property type="project" value="InterPro"/>
</dbReference>
<dbReference type="CDD" id="cd09288">
    <property type="entry name" value="Photosystem-II_D2"/>
    <property type="match status" value="1"/>
</dbReference>
<dbReference type="FunFam" id="1.20.85.10:FF:000001">
    <property type="entry name" value="photosystem II D2 protein-like"/>
    <property type="match status" value="1"/>
</dbReference>
<dbReference type="Gene3D" id="1.20.85.10">
    <property type="entry name" value="Photosystem II protein D1-like"/>
    <property type="match status" value="1"/>
</dbReference>
<dbReference type="HAMAP" id="MF_01383">
    <property type="entry name" value="PSII_PsbD_D2"/>
    <property type="match status" value="1"/>
</dbReference>
<dbReference type="InterPro" id="IPR055266">
    <property type="entry name" value="D1/D2"/>
</dbReference>
<dbReference type="InterPro" id="IPR036854">
    <property type="entry name" value="Photo_II_D1/D2_sf"/>
</dbReference>
<dbReference type="InterPro" id="IPR000484">
    <property type="entry name" value="Photo_RC_L/M"/>
</dbReference>
<dbReference type="InterPro" id="IPR055265">
    <property type="entry name" value="Photo_RC_L/M_CS"/>
</dbReference>
<dbReference type="InterPro" id="IPR005868">
    <property type="entry name" value="PSII_PsbD/D2"/>
</dbReference>
<dbReference type="NCBIfam" id="TIGR01152">
    <property type="entry name" value="psbD"/>
    <property type="match status" value="1"/>
</dbReference>
<dbReference type="PANTHER" id="PTHR33149:SF12">
    <property type="entry name" value="PHOTOSYSTEM II D2 PROTEIN"/>
    <property type="match status" value="1"/>
</dbReference>
<dbReference type="PANTHER" id="PTHR33149">
    <property type="entry name" value="PHOTOSYSTEM II PROTEIN D1"/>
    <property type="match status" value="1"/>
</dbReference>
<dbReference type="Pfam" id="PF00124">
    <property type="entry name" value="Photo_RC"/>
    <property type="match status" value="1"/>
</dbReference>
<dbReference type="PRINTS" id="PR00256">
    <property type="entry name" value="REACTNCENTRE"/>
</dbReference>
<dbReference type="SUPFAM" id="SSF81483">
    <property type="entry name" value="Bacterial photosystem II reaction centre, L and M subunits"/>
    <property type="match status" value="1"/>
</dbReference>
<dbReference type="PROSITE" id="PS00244">
    <property type="entry name" value="REACTION_CENTER"/>
    <property type="match status" value="1"/>
</dbReference>
<proteinExistence type="inferred from homology"/>